<organism>
    <name type="scientific">Rickettsia peacockii (strain Rustic)</name>
    <dbReference type="NCBI Taxonomy" id="562019"/>
    <lineage>
        <taxon>Bacteria</taxon>
        <taxon>Pseudomonadati</taxon>
        <taxon>Pseudomonadota</taxon>
        <taxon>Alphaproteobacteria</taxon>
        <taxon>Rickettsiales</taxon>
        <taxon>Rickettsiaceae</taxon>
        <taxon>Rickettsieae</taxon>
        <taxon>Rickettsia</taxon>
        <taxon>spotted fever group</taxon>
    </lineage>
</organism>
<accession>C4K2H1</accession>
<comment type="similarity">
    <text evidence="1">Belongs to the universal ribosomal protein uL29 family.</text>
</comment>
<reference key="1">
    <citation type="journal article" date="2009" name="PLoS ONE">
        <title>Genome sequence of the endosymbiont Rickettsia peacockii and comparison with virulent Rickettsia rickettsii: identification of virulence factors.</title>
        <authorList>
            <person name="Felsheim R.F."/>
            <person name="Kurtti T.J."/>
            <person name="Munderloh U.G."/>
        </authorList>
    </citation>
    <scope>NUCLEOTIDE SEQUENCE [LARGE SCALE GENOMIC DNA]</scope>
    <source>
        <strain>Rustic</strain>
    </source>
</reference>
<protein>
    <recommendedName>
        <fullName evidence="1">Large ribosomal subunit protein uL29</fullName>
    </recommendedName>
    <alternativeName>
        <fullName evidence="2">50S ribosomal protein L29</fullName>
    </alternativeName>
</protein>
<evidence type="ECO:0000255" key="1">
    <source>
        <dbReference type="HAMAP-Rule" id="MF_00374"/>
    </source>
</evidence>
<evidence type="ECO:0000305" key="2"/>
<proteinExistence type="inferred from homology"/>
<gene>
    <name evidence="1" type="primary">rpmC</name>
    <name type="ordered locus">RPR_06190</name>
</gene>
<keyword id="KW-0687">Ribonucleoprotein</keyword>
<keyword id="KW-0689">Ribosomal protein</keyword>
<feature type="chain" id="PRO_1000205637" description="Large ribosomal subunit protein uL29">
    <location>
        <begin position="1"/>
        <end position="71"/>
    </location>
</feature>
<dbReference type="EMBL" id="CP001227">
    <property type="protein sequence ID" value="ACR47768.1"/>
    <property type="molecule type" value="Genomic_DNA"/>
</dbReference>
<dbReference type="RefSeq" id="WP_004997809.1">
    <property type="nucleotide sequence ID" value="NC_012730.1"/>
</dbReference>
<dbReference type="SMR" id="C4K2H1"/>
<dbReference type="GeneID" id="95361478"/>
<dbReference type="KEGG" id="rpk:RPR_06190"/>
<dbReference type="HOGENOM" id="CLU_158491_1_0_5"/>
<dbReference type="Proteomes" id="UP000005015">
    <property type="component" value="Chromosome"/>
</dbReference>
<dbReference type="GO" id="GO:0022625">
    <property type="term" value="C:cytosolic large ribosomal subunit"/>
    <property type="evidence" value="ECO:0007669"/>
    <property type="project" value="TreeGrafter"/>
</dbReference>
<dbReference type="GO" id="GO:0003735">
    <property type="term" value="F:structural constituent of ribosome"/>
    <property type="evidence" value="ECO:0007669"/>
    <property type="project" value="InterPro"/>
</dbReference>
<dbReference type="GO" id="GO:0006412">
    <property type="term" value="P:translation"/>
    <property type="evidence" value="ECO:0007669"/>
    <property type="project" value="UniProtKB-UniRule"/>
</dbReference>
<dbReference type="CDD" id="cd00427">
    <property type="entry name" value="Ribosomal_L29_HIP"/>
    <property type="match status" value="1"/>
</dbReference>
<dbReference type="FunFam" id="1.10.287.310:FF:000001">
    <property type="entry name" value="50S ribosomal protein L29"/>
    <property type="match status" value="1"/>
</dbReference>
<dbReference type="Gene3D" id="1.10.287.310">
    <property type="match status" value="1"/>
</dbReference>
<dbReference type="HAMAP" id="MF_00374">
    <property type="entry name" value="Ribosomal_uL29"/>
    <property type="match status" value="1"/>
</dbReference>
<dbReference type="InterPro" id="IPR050063">
    <property type="entry name" value="Ribosomal_protein_uL29"/>
</dbReference>
<dbReference type="InterPro" id="IPR001854">
    <property type="entry name" value="Ribosomal_uL29"/>
</dbReference>
<dbReference type="InterPro" id="IPR018254">
    <property type="entry name" value="Ribosomal_uL29_CS"/>
</dbReference>
<dbReference type="InterPro" id="IPR036049">
    <property type="entry name" value="Ribosomal_uL29_sf"/>
</dbReference>
<dbReference type="NCBIfam" id="TIGR00012">
    <property type="entry name" value="L29"/>
    <property type="match status" value="1"/>
</dbReference>
<dbReference type="PANTHER" id="PTHR10916">
    <property type="entry name" value="60S RIBOSOMAL PROTEIN L35/50S RIBOSOMAL PROTEIN L29"/>
    <property type="match status" value="1"/>
</dbReference>
<dbReference type="PANTHER" id="PTHR10916:SF0">
    <property type="entry name" value="LARGE RIBOSOMAL SUBUNIT PROTEIN UL29C"/>
    <property type="match status" value="1"/>
</dbReference>
<dbReference type="Pfam" id="PF00831">
    <property type="entry name" value="Ribosomal_L29"/>
    <property type="match status" value="1"/>
</dbReference>
<dbReference type="SUPFAM" id="SSF46561">
    <property type="entry name" value="Ribosomal protein L29 (L29p)"/>
    <property type="match status" value="1"/>
</dbReference>
<dbReference type="PROSITE" id="PS00579">
    <property type="entry name" value="RIBOSOMAL_L29"/>
    <property type="match status" value="1"/>
</dbReference>
<name>RL29_RICPU</name>
<sequence>MNDLKLLRSKLSTETIEELYKNLNLLKKELFNLRFQQALGDLKNTSRFSLVKKSIARIKTELTKRANSEEY</sequence>